<evidence type="ECO:0000255" key="1">
    <source>
        <dbReference type="HAMAP-Rule" id="MF_01328"/>
    </source>
</evidence>
<evidence type="ECO:0000256" key="2">
    <source>
        <dbReference type="SAM" id="MobiDB-lite"/>
    </source>
</evidence>
<evidence type="ECO:0000305" key="3"/>
<sequence length="205" mass="22547">MDLTVINDRGEQVASVAASDETFGRDYNEALVHQVVTAFQANARSGNRAQQTRAEVSASTHKPWRQKGTGRARSGRASSPIWRGGGVTFPNKPNENFTHKVNRKMYRAGLAAILSQLAREGKLKVVESLGIESPKTKLLAGKLKSMGYGKVMIIADAIDDNLWLSSRNLPNVYVVEPHQADPWSLVKFGNVLITKAAIKQFEEMV</sequence>
<dbReference type="EMBL" id="CP000116">
    <property type="protein sequence ID" value="AAZ96359.1"/>
    <property type="molecule type" value="Genomic_DNA"/>
</dbReference>
<dbReference type="RefSeq" id="WP_011310918.1">
    <property type="nucleotide sequence ID" value="NC_007404.1"/>
</dbReference>
<dbReference type="SMR" id="Q3SLP8"/>
<dbReference type="STRING" id="292415.Tbd_0406"/>
<dbReference type="KEGG" id="tbd:Tbd_0406"/>
<dbReference type="eggNOG" id="COG0088">
    <property type="taxonomic scope" value="Bacteria"/>
</dbReference>
<dbReference type="HOGENOM" id="CLU_041575_5_2_4"/>
<dbReference type="OrthoDB" id="9803201at2"/>
<dbReference type="Proteomes" id="UP000008291">
    <property type="component" value="Chromosome"/>
</dbReference>
<dbReference type="GO" id="GO:1990904">
    <property type="term" value="C:ribonucleoprotein complex"/>
    <property type="evidence" value="ECO:0007669"/>
    <property type="project" value="UniProtKB-KW"/>
</dbReference>
<dbReference type="GO" id="GO:0005840">
    <property type="term" value="C:ribosome"/>
    <property type="evidence" value="ECO:0007669"/>
    <property type="project" value="UniProtKB-KW"/>
</dbReference>
<dbReference type="GO" id="GO:0019843">
    <property type="term" value="F:rRNA binding"/>
    <property type="evidence" value="ECO:0007669"/>
    <property type="project" value="UniProtKB-UniRule"/>
</dbReference>
<dbReference type="GO" id="GO:0003735">
    <property type="term" value="F:structural constituent of ribosome"/>
    <property type="evidence" value="ECO:0007669"/>
    <property type="project" value="InterPro"/>
</dbReference>
<dbReference type="GO" id="GO:0006412">
    <property type="term" value="P:translation"/>
    <property type="evidence" value="ECO:0007669"/>
    <property type="project" value="UniProtKB-UniRule"/>
</dbReference>
<dbReference type="Gene3D" id="3.40.1370.10">
    <property type="match status" value="1"/>
</dbReference>
<dbReference type="HAMAP" id="MF_01328_B">
    <property type="entry name" value="Ribosomal_uL4_B"/>
    <property type="match status" value="1"/>
</dbReference>
<dbReference type="InterPro" id="IPR002136">
    <property type="entry name" value="Ribosomal_uL4"/>
</dbReference>
<dbReference type="InterPro" id="IPR013005">
    <property type="entry name" value="Ribosomal_uL4-like"/>
</dbReference>
<dbReference type="InterPro" id="IPR023574">
    <property type="entry name" value="Ribosomal_uL4_dom_sf"/>
</dbReference>
<dbReference type="NCBIfam" id="TIGR03953">
    <property type="entry name" value="rplD_bact"/>
    <property type="match status" value="1"/>
</dbReference>
<dbReference type="PANTHER" id="PTHR10746">
    <property type="entry name" value="50S RIBOSOMAL PROTEIN L4"/>
    <property type="match status" value="1"/>
</dbReference>
<dbReference type="PANTHER" id="PTHR10746:SF6">
    <property type="entry name" value="LARGE RIBOSOMAL SUBUNIT PROTEIN UL4M"/>
    <property type="match status" value="1"/>
</dbReference>
<dbReference type="Pfam" id="PF00573">
    <property type="entry name" value="Ribosomal_L4"/>
    <property type="match status" value="1"/>
</dbReference>
<dbReference type="SUPFAM" id="SSF52166">
    <property type="entry name" value="Ribosomal protein L4"/>
    <property type="match status" value="1"/>
</dbReference>
<feature type="chain" id="PRO_0000242456" description="Large ribosomal subunit protein uL4">
    <location>
        <begin position="1"/>
        <end position="205"/>
    </location>
</feature>
<feature type="region of interest" description="Disordered" evidence="2">
    <location>
        <begin position="43"/>
        <end position="96"/>
    </location>
</feature>
<feature type="compositionally biased region" description="Polar residues" evidence="2">
    <location>
        <begin position="43"/>
        <end position="60"/>
    </location>
</feature>
<feature type="compositionally biased region" description="Basic residues" evidence="2">
    <location>
        <begin position="62"/>
        <end position="74"/>
    </location>
</feature>
<name>RL4_THIDA</name>
<organism>
    <name type="scientific">Thiobacillus denitrificans (strain ATCC 25259 / T1)</name>
    <dbReference type="NCBI Taxonomy" id="292415"/>
    <lineage>
        <taxon>Bacteria</taxon>
        <taxon>Pseudomonadati</taxon>
        <taxon>Pseudomonadota</taxon>
        <taxon>Betaproteobacteria</taxon>
        <taxon>Nitrosomonadales</taxon>
        <taxon>Thiobacillaceae</taxon>
        <taxon>Thiobacillus</taxon>
    </lineage>
</organism>
<comment type="function">
    <text evidence="1">One of the primary rRNA binding proteins, this protein initially binds near the 5'-end of the 23S rRNA. It is important during the early stages of 50S assembly. It makes multiple contacts with different domains of the 23S rRNA in the assembled 50S subunit and ribosome.</text>
</comment>
<comment type="function">
    <text evidence="1">Forms part of the polypeptide exit tunnel.</text>
</comment>
<comment type="subunit">
    <text evidence="1">Part of the 50S ribosomal subunit.</text>
</comment>
<comment type="similarity">
    <text evidence="1">Belongs to the universal ribosomal protein uL4 family.</text>
</comment>
<gene>
    <name evidence="1" type="primary">rplD</name>
    <name type="ordered locus">Tbd_0406</name>
</gene>
<proteinExistence type="inferred from homology"/>
<protein>
    <recommendedName>
        <fullName evidence="1">Large ribosomal subunit protein uL4</fullName>
    </recommendedName>
    <alternativeName>
        <fullName evidence="3">50S ribosomal protein L4</fullName>
    </alternativeName>
</protein>
<accession>Q3SLP8</accession>
<reference key="1">
    <citation type="journal article" date="2006" name="J. Bacteriol.">
        <title>The genome sequence of the obligately chemolithoautotrophic, facultatively anaerobic bacterium Thiobacillus denitrificans.</title>
        <authorList>
            <person name="Beller H.R."/>
            <person name="Chain P.S."/>
            <person name="Letain T.E."/>
            <person name="Chakicherla A."/>
            <person name="Larimer F.W."/>
            <person name="Richardson P.M."/>
            <person name="Coleman M.A."/>
            <person name="Wood A.P."/>
            <person name="Kelly D.P."/>
        </authorList>
    </citation>
    <scope>NUCLEOTIDE SEQUENCE [LARGE SCALE GENOMIC DNA]</scope>
    <source>
        <strain>ATCC 25259 / T1</strain>
    </source>
</reference>
<keyword id="KW-1185">Reference proteome</keyword>
<keyword id="KW-0687">Ribonucleoprotein</keyword>
<keyword id="KW-0689">Ribosomal protein</keyword>
<keyword id="KW-0694">RNA-binding</keyword>
<keyword id="KW-0699">rRNA-binding</keyword>